<organism>
    <name type="scientific">Vibrio cholerae serotype O1 (strain ATCC 39315 / El Tor Inaba N16961)</name>
    <dbReference type="NCBI Taxonomy" id="243277"/>
    <lineage>
        <taxon>Bacteria</taxon>
        <taxon>Pseudomonadati</taxon>
        <taxon>Pseudomonadota</taxon>
        <taxon>Gammaproteobacteria</taxon>
        <taxon>Vibrionales</taxon>
        <taxon>Vibrionaceae</taxon>
        <taxon>Vibrio</taxon>
    </lineage>
</organism>
<evidence type="ECO:0000255" key="1">
    <source>
        <dbReference type="HAMAP-Rule" id="MF_01643"/>
    </source>
</evidence>
<evidence type="ECO:0000305" key="2"/>
<gene>
    <name evidence="1" type="primary">purT</name>
    <name type="ordered locus">VC_1228</name>
</gene>
<name>PURT_VIBCH</name>
<protein>
    <recommendedName>
        <fullName evidence="1">Formate-dependent phosphoribosylglycinamide formyltransferase</fullName>
        <ecNumber evidence="1">6.3.1.21</ecNumber>
    </recommendedName>
    <alternativeName>
        <fullName evidence="1">5'-phosphoribosylglycinamide transformylase 2</fullName>
    </alternativeName>
    <alternativeName>
        <fullName evidence="1">Formate-dependent GAR transformylase</fullName>
    </alternativeName>
    <alternativeName>
        <fullName evidence="1">GAR transformylase 2</fullName>
        <shortName evidence="1">GART 2</shortName>
    </alternativeName>
    <alternativeName>
        <fullName evidence="1">Non-folate glycinamide ribonucleotide transformylase</fullName>
    </alternativeName>
    <alternativeName>
        <fullName evidence="1">Phosphoribosylglycinamide formyltransferase 2</fullName>
    </alternativeName>
</protein>
<feature type="chain" id="PRO_0000319256" description="Formate-dependent phosphoribosylglycinamide formyltransferase">
    <location>
        <begin position="1"/>
        <end position="391"/>
    </location>
</feature>
<feature type="domain" description="ATP-grasp" evidence="1">
    <location>
        <begin position="117"/>
        <end position="306"/>
    </location>
</feature>
<feature type="binding site" evidence="1">
    <location>
        <begin position="20"/>
        <end position="21"/>
    </location>
    <ligand>
        <name>N(1)-(5-phospho-beta-D-ribosyl)glycinamide</name>
        <dbReference type="ChEBI" id="CHEBI:143788"/>
    </ligand>
</feature>
<feature type="binding site" evidence="1">
    <location>
        <position position="80"/>
    </location>
    <ligand>
        <name>N(1)-(5-phospho-beta-D-ribosyl)glycinamide</name>
        <dbReference type="ChEBI" id="CHEBI:143788"/>
    </ligand>
</feature>
<feature type="binding site" evidence="1">
    <location>
        <position position="112"/>
    </location>
    <ligand>
        <name>ATP</name>
        <dbReference type="ChEBI" id="CHEBI:30616"/>
    </ligand>
</feature>
<feature type="binding site" evidence="1">
    <location>
        <position position="153"/>
    </location>
    <ligand>
        <name>ATP</name>
        <dbReference type="ChEBI" id="CHEBI:30616"/>
    </ligand>
</feature>
<feature type="binding site" evidence="1">
    <location>
        <begin position="158"/>
        <end position="163"/>
    </location>
    <ligand>
        <name>ATP</name>
        <dbReference type="ChEBI" id="CHEBI:30616"/>
    </ligand>
</feature>
<feature type="binding site" evidence="1">
    <location>
        <begin position="193"/>
        <end position="196"/>
    </location>
    <ligand>
        <name>ATP</name>
        <dbReference type="ChEBI" id="CHEBI:30616"/>
    </ligand>
</feature>
<feature type="binding site" evidence="1">
    <location>
        <position position="201"/>
    </location>
    <ligand>
        <name>ATP</name>
        <dbReference type="ChEBI" id="CHEBI:30616"/>
    </ligand>
</feature>
<feature type="binding site" evidence="1">
    <location>
        <position position="265"/>
    </location>
    <ligand>
        <name>Mg(2+)</name>
        <dbReference type="ChEBI" id="CHEBI:18420"/>
    </ligand>
</feature>
<feature type="binding site" evidence="1">
    <location>
        <position position="277"/>
    </location>
    <ligand>
        <name>Mg(2+)</name>
        <dbReference type="ChEBI" id="CHEBI:18420"/>
    </ligand>
</feature>
<feature type="binding site" evidence="1">
    <location>
        <position position="284"/>
    </location>
    <ligand>
        <name>N(1)-(5-phospho-beta-D-ribosyl)glycinamide</name>
        <dbReference type="ChEBI" id="CHEBI:143788"/>
    </ligand>
</feature>
<feature type="binding site" evidence="1">
    <location>
        <position position="354"/>
    </location>
    <ligand>
        <name>N(1)-(5-phospho-beta-D-ribosyl)glycinamide</name>
        <dbReference type="ChEBI" id="CHEBI:143788"/>
    </ligand>
</feature>
<feature type="binding site" evidence="1">
    <location>
        <begin position="361"/>
        <end position="362"/>
    </location>
    <ligand>
        <name>N(1)-(5-phospho-beta-D-ribosyl)glycinamide</name>
        <dbReference type="ChEBI" id="CHEBI:143788"/>
    </ligand>
</feature>
<comment type="function">
    <text evidence="1">Involved in the de novo purine biosynthesis. Catalyzes the transfer of formate to 5-phospho-ribosyl-glycinamide (GAR), producing 5-phospho-ribosyl-N-formylglycinamide (FGAR). Formate is provided by PurU via hydrolysis of 10-formyl-tetrahydrofolate.</text>
</comment>
<comment type="catalytic activity">
    <reaction evidence="1">
        <text>N(1)-(5-phospho-beta-D-ribosyl)glycinamide + formate + ATP = N(2)-formyl-N(1)-(5-phospho-beta-D-ribosyl)glycinamide + ADP + phosphate + H(+)</text>
        <dbReference type="Rhea" id="RHEA:24829"/>
        <dbReference type="ChEBI" id="CHEBI:15378"/>
        <dbReference type="ChEBI" id="CHEBI:15740"/>
        <dbReference type="ChEBI" id="CHEBI:30616"/>
        <dbReference type="ChEBI" id="CHEBI:43474"/>
        <dbReference type="ChEBI" id="CHEBI:143788"/>
        <dbReference type="ChEBI" id="CHEBI:147286"/>
        <dbReference type="ChEBI" id="CHEBI:456216"/>
        <dbReference type="EC" id="6.3.1.21"/>
    </reaction>
    <physiologicalReaction direction="left-to-right" evidence="1">
        <dbReference type="Rhea" id="RHEA:24830"/>
    </physiologicalReaction>
</comment>
<comment type="pathway">
    <text evidence="1">Purine metabolism; IMP biosynthesis via de novo pathway; N(2)-formyl-N(1)-(5-phospho-D-ribosyl)glycinamide from N(1)-(5-phospho-D-ribosyl)glycinamide (formate route): step 1/1.</text>
</comment>
<comment type="subunit">
    <text evidence="1">Homodimer.</text>
</comment>
<comment type="similarity">
    <text evidence="1">Belongs to the PurK/PurT family.</text>
</comment>
<comment type="sequence caution" evidence="2">
    <conflict type="erroneous initiation">
        <sequence resource="EMBL-CDS" id="AAF94387"/>
    </conflict>
</comment>
<keyword id="KW-0067">ATP-binding</keyword>
<keyword id="KW-0436">Ligase</keyword>
<keyword id="KW-0460">Magnesium</keyword>
<keyword id="KW-0479">Metal-binding</keyword>
<keyword id="KW-0547">Nucleotide-binding</keyword>
<keyword id="KW-0658">Purine biosynthesis</keyword>
<keyword id="KW-1185">Reference proteome</keyword>
<reference key="1">
    <citation type="journal article" date="2000" name="Nature">
        <title>DNA sequence of both chromosomes of the cholera pathogen Vibrio cholerae.</title>
        <authorList>
            <person name="Heidelberg J.F."/>
            <person name="Eisen J.A."/>
            <person name="Nelson W.C."/>
            <person name="Clayton R.A."/>
            <person name="Gwinn M.L."/>
            <person name="Dodson R.J."/>
            <person name="Haft D.H."/>
            <person name="Hickey E.K."/>
            <person name="Peterson J.D."/>
            <person name="Umayam L.A."/>
            <person name="Gill S.R."/>
            <person name="Nelson K.E."/>
            <person name="Read T.D."/>
            <person name="Tettelin H."/>
            <person name="Richardson D.L."/>
            <person name="Ermolaeva M.D."/>
            <person name="Vamathevan J.J."/>
            <person name="Bass S."/>
            <person name="Qin H."/>
            <person name="Dragoi I."/>
            <person name="Sellers P."/>
            <person name="McDonald L.A."/>
            <person name="Utterback T.R."/>
            <person name="Fleischmann R.D."/>
            <person name="Nierman W.C."/>
            <person name="White O."/>
            <person name="Salzberg S.L."/>
            <person name="Smith H.O."/>
            <person name="Colwell R.R."/>
            <person name="Mekalanos J.J."/>
            <person name="Venter J.C."/>
            <person name="Fraser C.M."/>
        </authorList>
    </citation>
    <scope>NUCLEOTIDE SEQUENCE [LARGE SCALE GENOMIC DNA]</scope>
    <source>
        <strain>ATCC 39315 / El Tor Inaba N16961</strain>
    </source>
</reference>
<sequence>MFGTATRDNATRVLLLGSGELGKEVAIECQRLGLEVIACDRYADAPAMQVAHRSHVFDMLDADALQQVIDLEKPHFVVPEIEAIATSKLVELEAQGLNVVPTANATRLTMNREGIRRLAAEELGLPTSAYQFADSYESFAAAVETIGLPCVCKPVMSSSGKGQSVIRTPEQIEAAWQYAQQGGRSGAGRVIVEGFVDFDYEITLLTVRAVDGVHFCAPIGHRQEDGDYRESWQPQVMSENAIKAAEYVAEQVVNALGGYGLFGVELFVKGDKVIFNEVSPRPHDTGMVTLISQELSEFALHVRAFTGLPIGQIVQYGPSASAAILGQGQSQNIQFNGLDDALSIPHTQVRLFGKPDIAGRRRLGVALSRGKTTQEATDRAIECAKAVKIHY</sequence>
<proteinExistence type="inferred from homology"/>
<accession>Q9KSM8</accession>
<dbReference type="EC" id="6.3.1.21" evidence="1"/>
<dbReference type="EMBL" id="AE003852">
    <property type="protein sequence ID" value="AAF94387.1"/>
    <property type="status" value="ALT_INIT"/>
    <property type="molecule type" value="Genomic_DNA"/>
</dbReference>
<dbReference type="PIR" id="D82226">
    <property type="entry name" value="D82226"/>
</dbReference>
<dbReference type="RefSeq" id="NP_230873.1">
    <property type="nucleotide sequence ID" value="NC_002505.1"/>
</dbReference>
<dbReference type="RefSeq" id="WP_000468082.1">
    <property type="nucleotide sequence ID" value="NZ_LT906614.1"/>
</dbReference>
<dbReference type="SMR" id="Q9KSM8"/>
<dbReference type="STRING" id="243277.VC_1228"/>
<dbReference type="DNASU" id="2614665"/>
<dbReference type="EnsemblBacteria" id="AAF94387">
    <property type="protein sequence ID" value="AAF94387"/>
    <property type="gene ID" value="VC_1228"/>
</dbReference>
<dbReference type="KEGG" id="vch:VC_1228"/>
<dbReference type="PATRIC" id="fig|243277.26.peg.1171"/>
<dbReference type="eggNOG" id="COG0027">
    <property type="taxonomic scope" value="Bacteria"/>
</dbReference>
<dbReference type="HOGENOM" id="CLU_011534_1_3_6"/>
<dbReference type="UniPathway" id="UPA00074">
    <property type="reaction ID" value="UER00127"/>
</dbReference>
<dbReference type="Proteomes" id="UP000000584">
    <property type="component" value="Chromosome 1"/>
</dbReference>
<dbReference type="GO" id="GO:0005829">
    <property type="term" value="C:cytosol"/>
    <property type="evidence" value="ECO:0000318"/>
    <property type="project" value="GO_Central"/>
</dbReference>
<dbReference type="GO" id="GO:0005524">
    <property type="term" value="F:ATP binding"/>
    <property type="evidence" value="ECO:0007669"/>
    <property type="project" value="UniProtKB-UniRule"/>
</dbReference>
<dbReference type="GO" id="GO:0000287">
    <property type="term" value="F:magnesium ion binding"/>
    <property type="evidence" value="ECO:0007669"/>
    <property type="project" value="InterPro"/>
</dbReference>
<dbReference type="GO" id="GO:0043815">
    <property type="term" value="F:phosphoribosylglycinamide formyltransferase 2 activity"/>
    <property type="evidence" value="ECO:0007669"/>
    <property type="project" value="UniProtKB-UniRule"/>
</dbReference>
<dbReference type="GO" id="GO:0004644">
    <property type="term" value="F:phosphoribosylglycinamide formyltransferase activity"/>
    <property type="evidence" value="ECO:0007669"/>
    <property type="project" value="InterPro"/>
</dbReference>
<dbReference type="GO" id="GO:0006189">
    <property type="term" value="P:'de novo' IMP biosynthetic process"/>
    <property type="evidence" value="ECO:0007669"/>
    <property type="project" value="UniProtKB-UniRule"/>
</dbReference>
<dbReference type="FunFam" id="3.30.1490.20:FF:000013">
    <property type="entry name" value="Formate-dependent phosphoribosylglycinamide formyltransferase"/>
    <property type="match status" value="1"/>
</dbReference>
<dbReference type="FunFam" id="3.30.470.20:FF:000027">
    <property type="entry name" value="Formate-dependent phosphoribosylglycinamide formyltransferase"/>
    <property type="match status" value="1"/>
</dbReference>
<dbReference type="FunFam" id="3.40.50.20:FF:000007">
    <property type="entry name" value="Formate-dependent phosphoribosylglycinamide formyltransferase"/>
    <property type="match status" value="1"/>
</dbReference>
<dbReference type="Gene3D" id="3.40.50.20">
    <property type="match status" value="1"/>
</dbReference>
<dbReference type="Gene3D" id="3.30.1490.20">
    <property type="entry name" value="ATP-grasp fold, A domain"/>
    <property type="match status" value="1"/>
</dbReference>
<dbReference type="Gene3D" id="3.30.470.20">
    <property type="entry name" value="ATP-grasp fold, B domain"/>
    <property type="match status" value="1"/>
</dbReference>
<dbReference type="HAMAP" id="MF_01643">
    <property type="entry name" value="PurT"/>
    <property type="match status" value="1"/>
</dbReference>
<dbReference type="InterPro" id="IPR011761">
    <property type="entry name" value="ATP-grasp"/>
</dbReference>
<dbReference type="InterPro" id="IPR003135">
    <property type="entry name" value="ATP-grasp_carboxylate-amine"/>
</dbReference>
<dbReference type="InterPro" id="IPR013815">
    <property type="entry name" value="ATP_grasp_subdomain_1"/>
</dbReference>
<dbReference type="InterPro" id="IPR016185">
    <property type="entry name" value="PreATP-grasp_dom_sf"/>
</dbReference>
<dbReference type="InterPro" id="IPR005862">
    <property type="entry name" value="PurT"/>
</dbReference>
<dbReference type="InterPro" id="IPR054350">
    <property type="entry name" value="PurT/PurK_preATP-grasp"/>
</dbReference>
<dbReference type="InterPro" id="IPR048740">
    <property type="entry name" value="PurT_C"/>
</dbReference>
<dbReference type="InterPro" id="IPR011054">
    <property type="entry name" value="Rudment_hybrid_motif"/>
</dbReference>
<dbReference type="NCBIfam" id="NF006766">
    <property type="entry name" value="PRK09288.1"/>
    <property type="match status" value="1"/>
</dbReference>
<dbReference type="NCBIfam" id="TIGR01142">
    <property type="entry name" value="purT"/>
    <property type="match status" value="1"/>
</dbReference>
<dbReference type="PANTHER" id="PTHR43055">
    <property type="entry name" value="FORMATE-DEPENDENT PHOSPHORIBOSYLGLYCINAMIDE FORMYLTRANSFERASE"/>
    <property type="match status" value="1"/>
</dbReference>
<dbReference type="PANTHER" id="PTHR43055:SF1">
    <property type="entry name" value="FORMATE-DEPENDENT PHOSPHORIBOSYLGLYCINAMIDE FORMYLTRANSFERASE"/>
    <property type="match status" value="1"/>
</dbReference>
<dbReference type="Pfam" id="PF02222">
    <property type="entry name" value="ATP-grasp"/>
    <property type="match status" value="1"/>
</dbReference>
<dbReference type="Pfam" id="PF21244">
    <property type="entry name" value="PurT_C"/>
    <property type="match status" value="1"/>
</dbReference>
<dbReference type="Pfam" id="PF22660">
    <property type="entry name" value="RS_preATP-grasp-like"/>
    <property type="match status" value="1"/>
</dbReference>
<dbReference type="SUPFAM" id="SSF56059">
    <property type="entry name" value="Glutathione synthetase ATP-binding domain-like"/>
    <property type="match status" value="1"/>
</dbReference>
<dbReference type="SUPFAM" id="SSF52440">
    <property type="entry name" value="PreATP-grasp domain"/>
    <property type="match status" value="1"/>
</dbReference>
<dbReference type="SUPFAM" id="SSF51246">
    <property type="entry name" value="Rudiment single hybrid motif"/>
    <property type="match status" value="1"/>
</dbReference>
<dbReference type="PROSITE" id="PS50975">
    <property type="entry name" value="ATP_GRASP"/>
    <property type="match status" value="1"/>
</dbReference>